<organism>
    <name type="scientific">Oryza sativa subsp. japonica</name>
    <name type="common">Rice</name>
    <dbReference type="NCBI Taxonomy" id="39947"/>
    <lineage>
        <taxon>Eukaryota</taxon>
        <taxon>Viridiplantae</taxon>
        <taxon>Streptophyta</taxon>
        <taxon>Embryophyta</taxon>
        <taxon>Tracheophyta</taxon>
        <taxon>Spermatophyta</taxon>
        <taxon>Magnoliopsida</taxon>
        <taxon>Liliopsida</taxon>
        <taxon>Poales</taxon>
        <taxon>Poaceae</taxon>
        <taxon>BOP clade</taxon>
        <taxon>Oryzoideae</taxon>
        <taxon>Oryzeae</taxon>
        <taxon>Oryzinae</taxon>
        <taxon>Oryza</taxon>
        <taxon>Oryza sativa</taxon>
    </lineage>
</organism>
<accession>Q6YUE5</accession>
<accession>B7EH42</accession>
<accession>P83634</accession>
<gene>
    <name type="ordered locus">Os08g0218700</name>
    <name type="ordered locus">LOC_Os08g12160</name>
    <name type="ORF">B1049E04.7-1</name>
</gene>
<dbReference type="EMBL" id="AP005870">
    <property type="protein sequence ID" value="BAD03882.1"/>
    <property type="molecule type" value="Genomic_DNA"/>
</dbReference>
<dbReference type="EMBL" id="AP008214">
    <property type="protein sequence ID" value="BAF23178.1"/>
    <property type="molecule type" value="Genomic_DNA"/>
</dbReference>
<dbReference type="EMBL" id="AP014964">
    <property type="protein sequence ID" value="BAT04359.1"/>
    <property type="molecule type" value="Genomic_DNA"/>
</dbReference>
<dbReference type="EMBL" id="AK069940">
    <property type="protein sequence ID" value="BAG91689.1"/>
    <property type="molecule type" value="mRNA"/>
</dbReference>
<dbReference type="RefSeq" id="XP_015649550.1">
    <property type="nucleotide sequence ID" value="XM_015794064.1"/>
</dbReference>
<dbReference type="FunCoup" id="Q6YUE5">
    <property type="interactions" value="126"/>
</dbReference>
<dbReference type="PaxDb" id="39947-Q6YUE5"/>
<dbReference type="EnsemblPlants" id="Os08t0218700-01">
    <property type="protein sequence ID" value="Os08t0218700-01"/>
    <property type="gene ID" value="Os08g0218700"/>
</dbReference>
<dbReference type="Gramene" id="Os08t0218700-01">
    <property type="protein sequence ID" value="Os08t0218700-01"/>
    <property type="gene ID" value="Os08g0218700"/>
</dbReference>
<dbReference type="KEGG" id="dosa:Os08g0218700"/>
<dbReference type="HOGENOM" id="CLU_086824_1_0_1"/>
<dbReference type="InParanoid" id="Q6YUE5"/>
<dbReference type="OMA" id="CEIGYLF"/>
<dbReference type="OrthoDB" id="720956at2759"/>
<dbReference type="Proteomes" id="UP000000763">
    <property type="component" value="Chromosome 8"/>
</dbReference>
<dbReference type="Proteomes" id="UP000059680">
    <property type="component" value="Chromosome 8"/>
</dbReference>
<dbReference type="GO" id="GO:0005576">
    <property type="term" value="C:extracellular region"/>
    <property type="evidence" value="ECO:0007669"/>
    <property type="project" value="UniProtKB-SubCell"/>
</dbReference>
<dbReference type="GO" id="GO:0009505">
    <property type="term" value="C:plant-type cell wall"/>
    <property type="evidence" value="ECO:0000318"/>
    <property type="project" value="GO_Central"/>
</dbReference>
<dbReference type="GO" id="GO:0004857">
    <property type="term" value="F:enzyme inhibitor activity"/>
    <property type="evidence" value="ECO:0000318"/>
    <property type="project" value="GO_Central"/>
</dbReference>
<dbReference type="GO" id="GO:0009827">
    <property type="term" value="P:plant-type cell wall modification"/>
    <property type="evidence" value="ECO:0000318"/>
    <property type="project" value="GO_Central"/>
</dbReference>
<sequence length="224" mass="23457">MSRSSSSMATVLVVLMVVSAGGLSPPCAAAAKEEKPVVVLPPAAAPGEAPSADAAAFVRSCCDTALQADRDGSSFCYYHLLPYAAFFEGNQVKVAEVAATILSTNLWVYVDQLRKVQGGAGKGDPNLNACVDDFSVAAGENITREALQSLGRLAAAGNGKRSKEDLENAQKWIKGVEKPYNGGIGKASGCEIGYLFTYSDDLPAQKTLGYTFDTASSLINHIKL</sequence>
<comment type="subcellular location">
    <subcellularLocation>
        <location evidence="3">Secreted</location>
    </subcellularLocation>
</comment>
<name>Y8187_ORYSJ</name>
<feature type="signal peptide" evidence="1">
    <location>
        <begin position="1"/>
        <end position="30"/>
    </location>
</feature>
<feature type="chain" id="PRO_0000280232" description="Uncharacterized protein Os08g0218700/LOC_Os08g12160">
    <location>
        <begin position="31"/>
        <end position="224"/>
    </location>
</feature>
<feature type="glycosylation site" description="N-linked (GlcNAc...) asparagine" evidence="1">
    <location>
        <position position="141"/>
    </location>
</feature>
<feature type="sequence conflict" description="In Ref. 5; AA sequence." evidence="3" ref="5">
    <original>F</original>
    <variation>M</variation>
    <location>
        <position position="212"/>
    </location>
</feature>
<proteinExistence type="evidence at protein level"/>
<protein>
    <recommendedName>
        <fullName>Uncharacterized protein Os08g0218700/LOC_Os08g12160</fullName>
    </recommendedName>
    <alternativeName>
        <fullName>Unknown protein AN01 from 2D-PAGE of anther</fullName>
    </alternativeName>
</protein>
<reference evidence="4" key="1">
    <citation type="journal article" date="2005" name="Nature">
        <title>The map-based sequence of the rice genome.</title>
        <authorList>
            <consortium name="International rice genome sequencing project (IRGSP)"/>
        </authorList>
    </citation>
    <scope>NUCLEOTIDE SEQUENCE [LARGE SCALE GENOMIC DNA]</scope>
    <source>
        <strain>cv. Nipponbare</strain>
    </source>
</reference>
<reference key="2">
    <citation type="journal article" date="2008" name="Nucleic Acids Res.">
        <title>The rice annotation project database (RAP-DB): 2008 update.</title>
        <authorList>
            <consortium name="The rice annotation project (RAP)"/>
        </authorList>
    </citation>
    <scope>GENOME REANNOTATION</scope>
    <source>
        <strain>cv. Nipponbare</strain>
    </source>
</reference>
<reference key="3">
    <citation type="journal article" date="2013" name="Rice">
        <title>Improvement of the Oryza sativa Nipponbare reference genome using next generation sequence and optical map data.</title>
        <authorList>
            <person name="Kawahara Y."/>
            <person name="de la Bastide M."/>
            <person name="Hamilton J.P."/>
            <person name="Kanamori H."/>
            <person name="McCombie W.R."/>
            <person name="Ouyang S."/>
            <person name="Schwartz D.C."/>
            <person name="Tanaka T."/>
            <person name="Wu J."/>
            <person name="Zhou S."/>
            <person name="Childs K.L."/>
            <person name="Davidson R.M."/>
            <person name="Lin H."/>
            <person name="Quesada-Ocampo L."/>
            <person name="Vaillancourt B."/>
            <person name="Sakai H."/>
            <person name="Lee S.S."/>
            <person name="Kim J."/>
            <person name="Numa H."/>
            <person name="Itoh T."/>
            <person name="Buell C.R."/>
            <person name="Matsumoto T."/>
        </authorList>
    </citation>
    <scope>GENOME REANNOTATION</scope>
    <source>
        <strain>cv. Nipponbare</strain>
    </source>
</reference>
<reference key="4">
    <citation type="journal article" date="2003" name="Science">
        <title>Collection, mapping, and annotation of over 28,000 cDNA clones from japonica rice.</title>
        <authorList>
            <consortium name="The rice full-length cDNA consortium"/>
        </authorList>
    </citation>
    <scope>NUCLEOTIDE SEQUENCE [LARGE SCALE MRNA]</scope>
    <source>
        <strain>cv. Nipponbare</strain>
    </source>
</reference>
<reference key="5">
    <citation type="submission" date="2003-07" db="UniProtKB">
        <title>Proteome analysis of rice anther.</title>
        <authorList>
            <person name="Salekdeh G.H."/>
            <person name="Bennett J."/>
        </authorList>
    </citation>
    <scope>PROTEIN SEQUENCE OF 207-223</scope>
    <source>
        <strain evidence="2">cv. Indica / IR64</strain>
        <tissue evidence="2">Anther</tissue>
    </source>
</reference>
<evidence type="ECO:0000255" key="1"/>
<evidence type="ECO:0000269" key="2">
    <source ref="5"/>
</evidence>
<evidence type="ECO:0000305" key="3"/>
<evidence type="ECO:0000312" key="4">
    <source>
        <dbReference type="EMBL" id="BAD03882.1"/>
    </source>
</evidence>
<keyword id="KW-0903">Direct protein sequencing</keyword>
<keyword id="KW-0325">Glycoprotein</keyword>
<keyword id="KW-1185">Reference proteome</keyword>
<keyword id="KW-0964">Secreted</keyword>
<keyword id="KW-0732">Signal</keyword>